<evidence type="ECO:0000255" key="1">
    <source>
        <dbReference type="HAMAP-Rule" id="MF_00373"/>
    </source>
</evidence>
<evidence type="ECO:0000305" key="2"/>
<feature type="chain" id="PRO_1000121655" description="Large ribosomal subunit protein bL28">
    <location>
        <begin position="1"/>
        <end position="87"/>
    </location>
</feature>
<dbReference type="EMBL" id="CP000975">
    <property type="protein sequence ID" value="ACD83069.1"/>
    <property type="molecule type" value="Genomic_DNA"/>
</dbReference>
<dbReference type="RefSeq" id="WP_012463351.1">
    <property type="nucleotide sequence ID" value="NC_010794.1"/>
</dbReference>
<dbReference type="SMR" id="B3DUR6"/>
<dbReference type="STRING" id="481448.Minf_1014"/>
<dbReference type="KEGG" id="min:Minf_1014"/>
<dbReference type="eggNOG" id="COG0227">
    <property type="taxonomic scope" value="Bacteria"/>
</dbReference>
<dbReference type="HOGENOM" id="CLU_064548_3_2_0"/>
<dbReference type="OrthoDB" id="9801582at2"/>
<dbReference type="Proteomes" id="UP000009149">
    <property type="component" value="Chromosome"/>
</dbReference>
<dbReference type="GO" id="GO:1990904">
    <property type="term" value="C:ribonucleoprotein complex"/>
    <property type="evidence" value="ECO:0007669"/>
    <property type="project" value="UniProtKB-KW"/>
</dbReference>
<dbReference type="GO" id="GO:0005840">
    <property type="term" value="C:ribosome"/>
    <property type="evidence" value="ECO:0007669"/>
    <property type="project" value="UniProtKB-KW"/>
</dbReference>
<dbReference type="GO" id="GO:0003735">
    <property type="term" value="F:structural constituent of ribosome"/>
    <property type="evidence" value="ECO:0007669"/>
    <property type="project" value="InterPro"/>
</dbReference>
<dbReference type="GO" id="GO:0006412">
    <property type="term" value="P:translation"/>
    <property type="evidence" value="ECO:0007669"/>
    <property type="project" value="UniProtKB-UniRule"/>
</dbReference>
<dbReference type="Gene3D" id="2.30.170.40">
    <property type="entry name" value="Ribosomal protein L28/L24"/>
    <property type="match status" value="1"/>
</dbReference>
<dbReference type="HAMAP" id="MF_00373">
    <property type="entry name" value="Ribosomal_bL28"/>
    <property type="match status" value="1"/>
</dbReference>
<dbReference type="InterPro" id="IPR026569">
    <property type="entry name" value="Ribosomal_bL28"/>
</dbReference>
<dbReference type="InterPro" id="IPR034704">
    <property type="entry name" value="Ribosomal_bL28/bL31-like_sf"/>
</dbReference>
<dbReference type="InterPro" id="IPR001383">
    <property type="entry name" value="Ribosomal_bL28_bact-type"/>
</dbReference>
<dbReference type="InterPro" id="IPR037147">
    <property type="entry name" value="Ribosomal_bL28_sf"/>
</dbReference>
<dbReference type="NCBIfam" id="TIGR00009">
    <property type="entry name" value="L28"/>
    <property type="match status" value="1"/>
</dbReference>
<dbReference type="Pfam" id="PF00830">
    <property type="entry name" value="Ribosomal_L28"/>
    <property type="match status" value="1"/>
</dbReference>
<dbReference type="SUPFAM" id="SSF143800">
    <property type="entry name" value="L28p-like"/>
    <property type="match status" value="1"/>
</dbReference>
<sequence>MPRICPILDKRPTRGRKIIRKGKAKKKGGIGLHTTGNTPRLFLPNLRNKKVYVPELAKKVSLRISARALKTLMKKGTYTILKEKGLI</sequence>
<organism>
    <name type="scientific">Methylacidiphilum infernorum (isolate V4)</name>
    <name type="common">Methylokorus infernorum (strain V4)</name>
    <dbReference type="NCBI Taxonomy" id="481448"/>
    <lineage>
        <taxon>Bacteria</taxon>
        <taxon>Pseudomonadati</taxon>
        <taxon>Verrucomicrobiota</taxon>
        <taxon>Methylacidiphilae</taxon>
        <taxon>Methylacidiphilales</taxon>
        <taxon>Methylacidiphilaceae</taxon>
        <taxon>Methylacidiphilum (ex Ratnadevi et al. 2023)</taxon>
    </lineage>
</organism>
<comment type="similarity">
    <text evidence="1">Belongs to the bacterial ribosomal protein bL28 family.</text>
</comment>
<name>RL28_METI4</name>
<proteinExistence type="inferred from homology"/>
<accession>B3DUR6</accession>
<gene>
    <name evidence="1" type="primary">rpmB</name>
    <name type="ordered locus">Minf_1014</name>
</gene>
<protein>
    <recommendedName>
        <fullName evidence="1">Large ribosomal subunit protein bL28</fullName>
    </recommendedName>
    <alternativeName>
        <fullName evidence="2">50S ribosomal protein L28</fullName>
    </alternativeName>
</protein>
<reference key="1">
    <citation type="journal article" date="2008" name="Biol. Direct">
        <title>Complete genome sequence of the extremely acidophilic methanotroph isolate V4, Methylacidiphilum infernorum, a representative of the bacterial phylum Verrucomicrobia.</title>
        <authorList>
            <person name="Hou S."/>
            <person name="Makarova K.S."/>
            <person name="Saw J.H."/>
            <person name="Senin P."/>
            <person name="Ly B.V."/>
            <person name="Zhou Z."/>
            <person name="Ren Y."/>
            <person name="Wang J."/>
            <person name="Galperin M.Y."/>
            <person name="Omelchenko M.V."/>
            <person name="Wolf Y.I."/>
            <person name="Yutin N."/>
            <person name="Koonin E.V."/>
            <person name="Stott M.B."/>
            <person name="Mountain B.W."/>
            <person name="Crowe M.A."/>
            <person name="Smirnova A.V."/>
            <person name="Dunfield P.F."/>
            <person name="Feng L."/>
            <person name="Wang L."/>
            <person name="Alam M."/>
        </authorList>
    </citation>
    <scope>NUCLEOTIDE SEQUENCE [LARGE SCALE GENOMIC DNA]</scope>
    <source>
        <strain>Isolate V4</strain>
    </source>
</reference>
<keyword id="KW-0687">Ribonucleoprotein</keyword>
<keyword id="KW-0689">Ribosomal protein</keyword>